<accession>B1LFY6</accession>
<sequence length="125" mass="13867">MINSPRVCIQVQSVYIEAQSSPDNERYVFAYTVTIRNLGRAPVQLLGRYWLITNGNGRETEVQGEGVVGVQPLIAPGEEYQYTSGAIIETPLGTMQGHYEMIDENGVPFSIDIPVFRLAVPTLIH</sequence>
<proteinExistence type="inferred from homology"/>
<gene>
    <name evidence="1" type="primary">apaG</name>
    <name type="ordered locus">EcSMS35_0054</name>
</gene>
<dbReference type="EMBL" id="CP000970">
    <property type="protein sequence ID" value="ACB17768.1"/>
    <property type="molecule type" value="Genomic_DNA"/>
</dbReference>
<dbReference type="RefSeq" id="WP_000610901.1">
    <property type="nucleotide sequence ID" value="NC_010498.1"/>
</dbReference>
<dbReference type="SMR" id="B1LFY6"/>
<dbReference type="GeneID" id="93777385"/>
<dbReference type="KEGG" id="ecm:EcSMS35_0054"/>
<dbReference type="HOGENOM" id="CLU_128074_0_0_6"/>
<dbReference type="Proteomes" id="UP000007011">
    <property type="component" value="Chromosome"/>
</dbReference>
<dbReference type="GO" id="GO:0070987">
    <property type="term" value="P:error-free translesion synthesis"/>
    <property type="evidence" value="ECO:0007669"/>
    <property type="project" value="TreeGrafter"/>
</dbReference>
<dbReference type="Gene3D" id="2.60.40.1470">
    <property type="entry name" value="ApaG domain"/>
    <property type="match status" value="1"/>
</dbReference>
<dbReference type="HAMAP" id="MF_00791">
    <property type="entry name" value="ApaG"/>
    <property type="match status" value="1"/>
</dbReference>
<dbReference type="InterPro" id="IPR007474">
    <property type="entry name" value="ApaG_domain"/>
</dbReference>
<dbReference type="InterPro" id="IPR036767">
    <property type="entry name" value="ApaG_sf"/>
</dbReference>
<dbReference type="InterPro" id="IPR023065">
    <property type="entry name" value="Uncharacterised_ApaG"/>
</dbReference>
<dbReference type="NCBIfam" id="NF003967">
    <property type="entry name" value="PRK05461.1"/>
    <property type="match status" value="1"/>
</dbReference>
<dbReference type="PANTHER" id="PTHR14289">
    <property type="entry name" value="F-BOX ONLY PROTEIN 3"/>
    <property type="match status" value="1"/>
</dbReference>
<dbReference type="PANTHER" id="PTHR14289:SF16">
    <property type="entry name" value="POLYMERASE DELTA-INTERACTING PROTEIN 2"/>
    <property type="match status" value="1"/>
</dbReference>
<dbReference type="Pfam" id="PF04379">
    <property type="entry name" value="DUF525"/>
    <property type="match status" value="1"/>
</dbReference>
<dbReference type="SUPFAM" id="SSF110069">
    <property type="entry name" value="ApaG-like"/>
    <property type="match status" value="1"/>
</dbReference>
<dbReference type="PROSITE" id="PS51087">
    <property type="entry name" value="APAG"/>
    <property type="match status" value="1"/>
</dbReference>
<feature type="chain" id="PRO_1000133790" description="Protein ApaG">
    <location>
        <begin position="1"/>
        <end position="125"/>
    </location>
</feature>
<feature type="domain" description="ApaG" evidence="1">
    <location>
        <begin position="1"/>
        <end position="125"/>
    </location>
</feature>
<evidence type="ECO:0000255" key="1">
    <source>
        <dbReference type="HAMAP-Rule" id="MF_00791"/>
    </source>
</evidence>
<reference key="1">
    <citation type="journal article" date="2008" name="J. Bacteriol.">
        <title>Insights into the environmental resistance gene pool from the genome sequence of the multidrug-resistant environmental isolate Escherichia coli SMS-3-5.</title>
        <authorList>
            <person name="Fricke W.F."/>
            <person name="Wright M.S."/>
            <person name="Lindell A.H."/>
            <person name="Harkins D.M."/>
            <person name="Baker-Austin C."/>
            <person name="Ravel J."/>
            <person name="Stepanauskas R."/>
        </authorList>
    </citation>
    <scope>NUCLEOTIDE SEQUENCE [LARGE SCALE GENOMIC DNA]</scope>
    <source>
        <strain>SMS-3-5 / SECEC</strain>
    </source>
</reference>
<protein>
    <recommendedName>
        <fullName evidence="1">Protein ApaG</fullName>
    </recommendedName>
</protein>
<name>APAG_ECOSM</name>
<organism>
    <name type="scientific">Escherichia coli (strain SMS-3-5 / SECEC)</name>
    <dbReference type="NCBI Taxonomy" id="439855"/>
    <lineage>
        <taxon>Bacteria</taxon>
        <taxon>Pseudomonadati</taxon>
        <taxon>Pseudomonadota</taxon>
        <taxon>Gammaproteobacteria</taxon>
        <taxon>Enterobacterales</taxon>
        <taxon>Enterobacteriaceae</taxon>
        <taxon>Escherichia</taxon>
    </lineage>
</organism>